<protein>
    <recommendedName>
        <fullName evidence="1">Protein P</fullName>
    </recommendedName>
    <domain>
        <recommendedName>
            <fullName evidence="1">DNA-directed DNA polymerase</fullName>
            <ecNumber evidence="1">2.7.7.7</ecNumber>
        </recommendedName>
    </domain>
    <domain>
        <recommendedName>
            <fullName evidence="1">RNA-directed DNA polymerase</fullName>
            <ecNumber evidence="1">2.7.7.49</ecNumber>
        </recommendedName>
    </domain>
    <domain>
        <recommendedName>
            <fullName evidence="1">Ribonuclease H</fullName>
            <ecNumber evidence="1">3.1.26.4</ecNumber>
        </recommendedName>
    </domain>
</protein>
<name>DPOL_HBVB1</name>
<accession>P17394</accession>
<feature type="chain" id="PRO_0000222341" description="Protein P">
    <location>
        <begin position="1"/>
        <end position="843"/>
    </location>
</feature>
<feature type="domain" description="Reverse transcriptase" evidence="1">
    <location>
        <begin position="357"/>
        <end position="600"/>
    </location>
</feature>
<feature type="region of interest" description="Terminal protein domain (TP)" evidence="1">
    <location>
        <begin position="1"/>
        <end position="177"/>
    </location>
</feature>
<feature type="region of interest" description="Spacer" evidence="1">
    <location>
        <begin position="178"/>
        <end position="346"/>
    </location>
</feature>
<feature type="region of interest" description="Disordered" evidence="2">
    <location>
        <begin position="219"/>
        <end position="249"/>
    </location>
</feature>
<feature type="region of interest" description="Disordered" evidence="2">
    <location>
        <begin position="290"/>
        <end position="316"/>
    </location>
</feature>
<feature type="region of interest" description="Polymerase/reverse transcriptase domain (RT)" evidence="1">
    <location>
        <begin position="347"/>
        <end position="690"/>
    </location>
</feature>
<feature type="compositionally biased region" description="Polar residues" evidence="2">
    <location>
        <begin position="290"/>
        <end position="299"/>
    </location>
</feature>
<feature type="binding site" evidence="1">
    <location>
        <position position="429"/>
    </location>
    <ligand>
        <name>Mg(2+)</name>
        <dbReference type="ChEBI" id="CHEBI:18420"/>
        <note>catalytic</note>
    </ligand>
</feature>
<feature type="binding site" evidence="1">
    <location>
        <position position="551"/>
    </location>
    <ligand>
        <name>Mg(2+)</name>
        <dbReference type="ChEBI" id="CHEBI:18420"/>
        <note>catalytic</note>
    </ligand>
</feature>
<feature type="binding site" evidence="1">
    <location>
        <position position="552"/>
    </location>
    <ligand>
        <name>Mg(2+)</name>
        <dbReference type="ChEBI" id="CHEBI:18420"/>
        <note>catalytic</note>
    </ligand>
</feature>
<feature type="site" description="Priming of reverse-transcription by covalently linking the first nucleotide of the (-)DNA" evidence="1">
    <location>
        <position position="63"/>
    </location>
</feature>
<reference key="1">
    <citation type="journal article" date="1988" name="J. Gen. Virol.">
        <title>Typing hepatitis B virus by homology in nucleotide sequence: comparison of surface antigen subtypes.</title>
        <authorList>
            <person name="Okamoto H."/>
            <person name="Tsuda F."/>
            <person name="Sakugawa H."/>
            <person name="Sastrosoewignjo R.I."/>
            <person name="Imai M."/>
            <person name="Miyakawa Y."/>
            <person name="Mayumi M."/>
        </authorList>
    </citation>
    <scope>NUCLEOTIDE SEQUENCE [GENOMIC DNA]</scope>
</reference>
<reference key="2">
    <citation type="journal article" date="2007" name="World J. Gastroenterol.">
        <title>Hepatitis B virus replication.</title>
        <authorList>
            <person name="Beck J."/>
            <person name="Nassal M."/>
        </authorList>
    </citation>
    <scope>REVIEW</scope>
</reference>
<keyword id="KW-0235">DNA replication</keyword>
<keyword id="KW-0238">DNA-binding</keyword>
<keyword id="KW-0239">DNA-directed DNA polymerase</keyword>
<keyword id="KW-0255">Endonuclease</keyword>
<keyword id="KW-0945">Host-virus interaction</keyword>
<keyword id="KW-0378">Hydrolase</keyword>
<keyword id="KW-1090">Inhibition of host innate immune response by virus</keyword>
<keyword id="KW-1113">Inhibition of host RLR pathway by virus</keyword>
<keyword id="KW-0460">Magnesium</keyword>
<keyword id="KW-0479">Metal-binding</keyword>
<keyword id="KW-0511">Multifunctional enzyme</keyword>
<keyword id="KW-0540">Nuclease</keyword>
<keyword id="KW-0548">Nucleotidyltransferase</keyword>
<keyword id="KW-0695">RNA-directed DNA polymerase</keyword>
<keyword id="KW-0808">Transferase</keyword>
<keyword id="KW-0899">Viral immunoevasion</keyword>
<dbReference type="EC" id="2.7.7.7" evidence="1"/>
<dbReference type="EC" id="2.7.7.49" evidence="1"/>
<dbReference type="EC" id="3.1.26.4" evidence="1"/>
<dbReference type="EMBL" id="D00329">
    <property type="status" value="NOT_ANNOTATED_CDS"/>
    <property type="molecule type" value="Genomic_DNA"/>
</dbReference>
<dbReference type="PIR" id="D28925">
    <property type="entry name" value="JDVLJ1"/>
</dbReference>
<dbReference type="DrugCentral" id="P17394"/>
<dbReference type="Proteomes" id="UP000007913">
    <property type="component" value="Segment"/>
</dbReference>
<dbReference type="GO" id="GO:0003677">
    <property type="term" value="F:DNA binding"/>
    <property type="evidence" value="ECO:0007669"/>
    <property type="project" value="UniProtKB-UniRule"/>
</dbReference>
<dbReference type="GO" id="GO:0003887">
    <property type="term" value="F:DNA-directed DNA polymerase activity"/>
    <property type="evidence" value="ECO:0007669"/>
    <property type="project" value="UniProtKB-UniRule"/>
</dbReference>
<dbReference type="GO" id="GO:0046872">
    <property type="term" value="F:metal ion binding"/>
    <property type="evidence" value="ECO:0007669"/>
    <property type="project" value="UniProtKB-UniRule"/>
</dbReference>
<dbReference type="GO" id="GO:0003964">
    <property type="term" value="F:RNA-directed DNA polymerase activity"/>
    <property type="evidence" value="ECO:0007669"/>
    <property type="project" value="UniProtKB-UniRule"/>
</dbReference>
<dbReference type="GO" id="GO:0004523">
    <property type="term" value="F:RNA-DNA hybrid ribonuclease activity"/>
    <property type="evidence" value="ECO:0007669"/>
    <property type="project" value="UniProtKB-UniRule"/>
</dbReference>
<dbReference type="GO" id="GO:0006260">
    <property type="term" value="P:DNA replication"/>
    <property type="evidence" value="ECO:0007669"/>
    <property type="project" value="UniProtKB-UniRule"/>
</dbReference>
<dbReference type="GO" id="GO:0052170">
    <property type="term" value="P:symbiont-mediated suppression of host innate immune response"/>
    <property type="evidence" value="ECO:0007669"/>
    <property type="project" value="UniProtKB-UniRule"/>
</dbReference>
<dbReference type="FunFam" id="3.30.70.270:FF:000009">
    <property type="entry name" value="Protein P"/>
    <property type="match status" value="1"/>
</dbReference>
<dbReference type="Gene3D" id="3.30.70.270">
    <property type="match status" value="1"/>
</dbReference>
<dbReference type="HAMAP" id="MF_04073">
    <property type="entry name" value="HBV_DPOL"/>
    <property type="match status" value="1"/>
</dbReference>
<dbReference type="InterPro" id="IPR043502">
    <property type="entry name" value="DNA/RNA_pol_sf"/>
</dbReference>
<dbReference type="InterPro" id="IPR001462">
    <property type="entry name" value="DNApol_viral_C"/>
</dbReference>
<dbReference type="InterPro" id="IPR000201">
    <property type="entry name" value="DNApol_viral_N"/>
</dbReference>
<dbReference type="InterPro" id="IPR037531">
    <property type="entry name" value="HBV_DPOL"/>
</dbReference>
<dbReference type="InterPro" id="IPR043128">
    <property type="entry name" value="Rev_trsase/Diguanyl_cyclase"/>
</dbReference>
<dbReference type="InterPro" id="IPR000477">
    <property type="entry name" value="RT_dom"/>
</dbReference>
<dbReference type="InterPro" id="IPR051320">
    <property type="entry name" value="Viral_Replic_Matur_Polypro"/>
</dbReference>
<dbReference type="PANTHER" id="PTHR33064">
    <property type="entry name" value="POL PROTEIN"/>
    <property type="match status" value="1"/>
</dbReference>
<dbReference type="PANTHER" id="PTHR33064:SF37">
    <property type="entry name" value="RIBONUCLEASE H"/>
    <property type="match status" value="1"/>
</dbReference>
<dbReference type="Pfam" id="PF00336">
    <property type="entry name" value="DNA_pol_viral_C"/>
    <property type="match status" value="1"/>
</dbReference>
<dbReference type="Pfam" id="PF00242">
    <property type="entry name" value="DNA_pol_viral_N"/>
    <property type="match status" value="1"/>
</dbReference>
<dbReference type="Pfam" id="PF00078">
    <property type="entry name" value="RVT_1"/>
    <property type="match status" value="1"/>
</dbReference>
<dbReference type="SUPFAM" id="SSF56672">
    <property type="entry name" value="DNA/RNA polymerases"/>
    <property type="match status" value="1"/>
</dbReference>
<dbReference type="PROSITE" id="PS50878">
    <property type="entry name" value="RT_POL"/>
    <property type="match status" value="1"/>
</dbReference>
<evidence type="ECO:0000255" key="1">
    <source>
        <dbReference type="HAMAP-Rule" id="MF_04073"/>
    </source>
</evidence>
<evidence type="ECO:0000256" key="2">
    <source>
        <dbReference type="SAM" id="MobiDB-lite"/>
    </source>
</evidence>
<organismHost>
    <name type="scientific">Homo sapiens</name>
    <name type="common">Human</name>
    <dbReference type="NCBI Taxonomy" id="9606"/>
</organismHost>
<organismHost>
    <name type="scientific">Pan troglodytes</name>
    <name type="common">Chimpanzee</name>
    <dbReference type="NCBI Taxonomy" id="9598"/>
</organismHost>
<comment type="function">
    <text evidence="1">Multifunctional enzyme that converts the viral RNA genome into dsDNA in viral cytoplasmic capsids. This enzyme displays a DNA polymerase activity that can copy either DNA or RNA templates, and a ribonuclease H (RNase H) activity that cleaves the RNA strand of RNA-DNA heteroduplexes in a partially processive 3'- to 5'-endonucleasic mode. Neo-synthesized pregenomic RNA (pgRNA) are encapsidated together with the P protein, and reverse-transcribed inside the nucleocapsid. Initiation of reverse-transcription occurs first by binding the epsilon loop on the pgRNA genome, and is initiated by protein priming, thereby the 5'-end of (-)DNA is covalently linked to P protein. Partial (+)DNA is synthesized from the (-)DNA template and generates the relaxed circular DNA (RC-DNA) genome. After budding and infection, the RC-DNA migrates in the nucleus, and is converted into a plasmid-like covalently closed circular DNA (cccDNA). The activity of P protein does not seem to be necessary for cccDNA generation, and is presumably released from (+)DNA by host nuclear DNA repair machinery.</text>
</comment>
<comment type="catalytic activity">
    <reaction evidence="1">
        <text>DNA(n) + a 2'-deoxyribonucleoside 5'-triphosphate = DNA(n+1) + diphosphate</text>
        <dbReference type="Rhea" id="RHEA:22508"/>
        <dbReference type="Rhea" id="RHEA-COMP:17339"/>
        <dbReference type="Rhea" id="RHEA-COMP:17340"/>
        <dbReference type="ChEBI" id="CHEBI:33019"/>
        <dbReference type="ChEBI" id="CHEBI:61560"/>
        <dbReference type="ChEBI" id="CHEBI:173112"/>
        <dbReference type="EC" id="2.7.7.7"/>
    </reaction>
</comment>
<comment type="catalytic activity">
    <reaction evidence="1">
        <text>DNA(n) + a 2'-deoxyribonucleoside 5'-triphosphate = DNA(n+1) + diphosphate</text>
        <dbReference type="Rhea" id="RHEA:22508"/>
        <dbReference type="Rhea" id="RHEA-COMP:17339"/>
        <dbReference type="Rhea" id="RHEA-COMP:17340"/>
        <dbReference type="ChEBI" id="CHEBI:33019"/>
        <dbReference type="ChEBI" id="CHEBI:61560"/>
        <dbReference type="ChEBI" id="CHEBI:173112"/>
        <dbReference type="EC" id="2.7.7.49"/>
    </reaction>
</comment>
<comment type="catalytic activity">
    <reaction evidence="1">
        <text>Endonucleolytic cleavage to 5'-phosphomonoester.</text>
        <dbReference type="EC" id="3.1.26.4"/>
    </reaction>
</comment>
<comment type="activity regulation">
    <text evidence="1">Activated by host HSP70 and HSP40 in vitro to be able to bind the epsilon loop of the pgRNA. Because deletion of the RNase H region renders the protein partly chaperone-independent, the chaperones may be needed indirectly to relieve occlusion of the RNA-binding site by this domain. Inhibited by several reverse-transcriptase inhibitors: Lamivudine, Adefovir and Entecavir.</text>
</comment>
<comment type="domain">
    <text evidence="1">Terminal protein domain (TP) is hepadnavirus-specific. Spacer domain is highly variable and separates the TP and RT domains. Polymerase/reverse-transcriptase domain (RT) and ribonuclease H domain (RH) are similar to retrovirus reverse transcriptase/RNase H.</text>
</comment>
<comment type="domain">
    <text evidence="1">The polymerase/reverse transcriptase (RT) and ribonuclease H (RH) domains are structured in five subdomains: finger, palm, thumb, connection and RNase H. Within the palm subdomain, the 'primer grip' region is thought to be involved in the positioning of the primer terminus for accommodating the incoming nucleotide. The RH domain stabilizes the association of RT with primer-template.</text>
</comment>
<comment type="miscellaneous">
    <text evidence="1">Hepadnaviral virions contain probably just one P protein molecule per particle.</text>
</comment>
<comment type="similarity">
    <text evidence="1">Belongs to the hepadnaviridae P protein family.</text>
</comment>
<proteinExistence type="inferred from homology"/>
<gene>
    <name evidence="1" type="primary">P</name>
</gene>
<sequence>MPLSYQHFRKLLLLDDEAGPLEEELPRLADEGLNHRVAEDLNLGNPNVSIPWTHKVGNFTGLYSSTVPVFNPEWQTPSFPDIHLQEDIVDRCKQFVGPLTVNENRRLKLIMPARFYPNVTKYLPLDKGIKPYYPEHVVNHYFQTRHYLHTLWKAGILYKRESTHSASFCGSPYSWEQDLQHGRLVFQTSKRHGDKSFCPQSPGILPRSSVGPCIQSQLRKSRLGPQPTQGQLAGRPQGGSGSIRARIHPSPWGTVGVEPSGSGHTHICASSSSSCLHQSAVRTAAYSPISTSKGHSSSGHAVELHHFPPNSSRSQSQGSVLSCWWLQFRNSKPCSEYCLSHIVNLIEDWGPCAEHGEHRIRTPRTPARVTGGVFLVDKNPHNTTESRLVVDFSQFSRGNTRVSWPKFAVPNLQSLTNLLSSNLSWLSLDVSAAFYHLPLHPAAMPHLLVGSSGLSRYVARLSSNSRIINHQHGTMQDLHNSCSRNLYVSLMLLYKTYGWKLHLYSHPIILGFRKIPMGVGLSPFLLAQFTSAICSVVRRAFPHCLAFSYMDDVVLGAKSVQHLESLYAAVTNFLLSLGIHLNPNKTKRWGYSLNFMGYVIGSWGTWPQDHIVQNFKLCFRKLPVNRPIDWKVCQRIVGLLGFAAPFTQCGYPALMPLYACIQAKQAFTFSPTYKAFLSKQYMTLYPVARQRPGLCQVFADATPTGWGLAIGHQRMRGTFVSPLPIHTAELLAACFARSRSGANLIGTDNSVVLSRKYTSFPWLLGCAANWILRGTSFVYVPSALNPADDPSRGRLGLYRPLLRLPYRPTTGRTSLYADSPSVPSHLPDRVHFASPLHVAWRPP</sequence>
<organism>
    <name type="scientific">Hepatitis B virus genotype B1 subtype adw (isolate Japan/pJDW233/1988)</name>
    <name type="common">HBV-B</name>
    <dbReference type="NCBI Taxonomy" id="10413"/>
    <lineage>
        <taxon>Viruses</taxon>
        <taxon>Riboviria</taxon>
        <taxon>Pararnavirae</taxon>
        <taxon>Artverviricota</taxon>
        <taxon>Revtraviricetes</taxon>
        <taxon>Blubervirales</taxon>
        <taxon>Hepadnaviridae</taxon>
        <taxon>Orthohepadnavirus</taxon>
        <taxon>Hepatitis B virus</taxon>
    </lineage>
</organism>